<comment type="function">
    <text evidence="2">Purine nucleoside enzyme that catalyzes the phosphorolysis of adenosine and inosine nucleosides, yielding D-ribose 1-phosphate and the respective free bases, adenine and hypoxanthine. Also catalyzes the phosphorolysis of S-methyl-5'-thioadenosine into adenine and S-methyl-5-thio-alpha-D-ribose 1-phosphate. Also has adenosine deaminase activity.</text>
</comment>
<comment type="catalytic activity">
    <reaction evidence="2">
        <text>adenosine + phosphate = alpha-D-ribose 1-phosphate + adenine</text>
        <dbReference type="Rhea" id="RHEA:27642"/>
        <dbReference type="ChEBI" id="CHEBI:16335"/>
        <dbReference type="ChEBI" id="CHEBI:16708"/>
        <dbReference type="ChEBI" id="CHEBI:43474"/>
        <dbReference type="ChEBI" id="CHEBI:57720"/>
        <dbReference type="EC" id="2.4.2.1"/>
    </reaction>
    <physiologicalReaction direction="left-to-right" evidence="2">
        <dbReference type="Rhea" id="RHEA:27643"/>
    </physiologicalReaction>
</comment>
<comment type="catalytic activity">
    <reaction evidence="2">
        <text>S-methyl-5'-thioadenosine + phosphate = 5-(methylsulfanyl)-alpha-D-ribose 1-phosphate + adenine</text>
        <dbReference type="Rhea" id="RHEA:11852"/>
        <dbReference type="ChEBI" id="CHEBI:16708"/>
        <dbReference type="ChEBI" id="CHEBI:17509"/>
        <dbReference type="ChEBI" id="CHEBI:43474"/>
        <dbReference type="ChEBI" id="CHEBI:58533"/>
        <dbReference type="EC" id="2.4.2.28"/>
    </reaction>
    <physiologicalReaction direction="left-to-right" evidence="2">
        <dbReference type="Rhea" id="RHEA:11853"/>
    </physiologicalReaction>
</comment>
<comment type="catalytic activity">
    <reaction evidence="2">
        <text>inosine + phosphate = alpha-D-ribose 1-phosphate + hypoxanthine</text>
        <dbReference type="Rhea" id="RHEA:27646"/>
        <dbReference type="ChEBI" id="CHEBI:17368"/>
        <dbReference type="ChEBI" id="CHEBI:17596"/>
        <dbReference type="ChEBI" id="CHEBI:43474"/>
        <dbReference type="ChEBI" id="CHEBI:57720"/>
        <dbReference type="EC" id="2.4.2.1"/>
    </reaction>
    <physiologicalReaction direction="left-to-right" evidence="2">
        <dbReference type="Rhea" id="RHEA:27647"/>
    </physiologicalReaction>
</comment>
<comment type="catalytic activity">
    <reaction evidence="2">
        <text>adenosine + H2O + H(+) = inosine + NH4(+)</text>
        <dbReference type="Rhea" id="RHEA:24408"/>
        <dbReference type="ChEBI" id="CHEBI:15377"/>
        <dbReference type="ChEBI" id="CHEBI:15378"/>
        <dbReference type="ChEBI" id="CHEBI:16335"/>
        <dbReference type="ChEBI" id="CHEBI:17596"/>
        <dbReference type="ChEBI" id="CHEBI:28938"/>
        <dbReference type="EC" id="3.5.4.4"/>
    </reaction>
    <physiologicalReaction direction="left-to-right" evidence="2">
        <dbReference type="Rhea" id="RHEA:24409"/>
    </physiologicalReaction>
</comment>
<comment type="cofactor">
    <cofactor evidence="1">
        <name>Cu(2+)</name>
        <dbReference type="ChEBI" id="CHEBI:29036"/>
    </cofactor>
    <cofactor evidence="2">
        <name>Zn(2+)</name>
        <dbReference type="ChEBI" id="CHEBI:29105"/>
    </cofactor>
</comment>
<comment type="subunit">
    <text evidence="3">Homodimer.</text>
</comment>
<comment type="similarity">
    <text evidence="4">Belongs to the purine nucleoside phosphorylase YfiH/LACC1 family.</text>
</comment>
<gene>
    <name type="ordered locus">HI_0175</name>
</gene>
<sequence length="244" mass="27138">MQAINPNWNVPKNIHAFTTTREGGVSLAPYLSFNLGDHVGDNKSAVKTNRTLLVEKFGLPQTPIFLTQTHSTRVIQLPYSGQNLEADAVYTNVPNQVCVVMTADCLPVLFTTTSGNEVAATHAGWRGLCDGVLEETVKYFQAKPEDIIAWFGPAIGPKAFQVGIDVVEKFVVVDEKAKLAFQPDAIEEGKYLSNLYQIATQRLNNLGITQIYGGNHCTFNEKEKFFSYRRDNQTGRMASVIWFE</sequence>
<keyword id="KW-0186">Copper</keyword>
<keyword id="KW-0378">Hydrolase</keyword>
<keyword id="KW-0479">Metal-binding</keyword>
<keyword id="KW-0560">Oxidoreductase</keyword>
<keyword id="KW-1185">Reference proteome</keyword>
<keyword id="KW-0808">Transferase</keyword>
<keyword id="KW-0862">Zinc</keyword>
<reference key="1">
    <citation type="journal article" date="1995" name="Science">
        <title>Whole-genome random sequencing and assembly of Haemophilus influenzae Rd.</title>
        <authorList>
            <person name="Fleischmann R.D."/>
            <person name="Adams M.D."/>
            <person name="White O."/>
            <person name="Clayton R.A."/>
            <person name="Kirkness E.F."/>
            <person name="Kerlavage A.R."/>
            <person name="Bult C.J."/>
            <person name="Tomb J.-F."/>
            <person name="Dougherty B.A."/>
            <person name="Merrick J.M."/>
            <person name="McKenney K."/>
            <person name="Sutton G.G."/>
            <person name="FitzHugh W."/>
            <person name="Fields C.A."/>
            <person name="Gocayne J.D."/>
            <person name="Scott J.D."/>
            <person name="Shirley R."/>
            <person name="Liu L.-I."/>
            <person name="Glodek A."/>
            <person name="Kelley J.M."/>
            <person name="Weidman J.F."/>
            <person name="Phillips C.A."/>
            <person name="Spriggs T."/>
            <person name="Hedblom E."/>
            <person name="Cotton M.D."/>
            <person name="Utterback T.R."/>
            <person name="Hanna M.C."/>
            <person name="Nguyen D.T."/>
            <person name="Saudek D.M."/>
            <person name="Brandon R.C."/>
            <person name="Fine L.D."/>
            <person name="Fritchman J.L."/>
            <person name="Fuhrmann J.L."/>
            <person name="Geoghagen N.S.M."/>
            <person name="Gnehm C.L."/>
            <person name="McDonald L.A."/>
            <person name="Small K.V."/>
            <person name="Fraser C.M."/>
            <person name="Smith H.O."/>
            <person name="Venter J.C."/>
        </authorList>
    </citation>
    <scope>NUCLEOTIDE SEQUENCE [LARGE SCALE GENOMIC DNA]</scope>
    <source>
        <strain>ATCC 51907 / DSM 11121 / KW20 / Rd</strain>
    </source>
</reference>
<dbReference type="EC" id="2.4.2.1" evidence="2"/>
<dbReference type="EC" id="3.5.4.4" evidence="2"/>
<dbReference type="EC" id="2.4.2.28" evidence="2"/>
<dbReference type="EMBL" id="L42023">
    <property type="protein sequence ID" value="AAC21844.1"/>
    <property type="molecule type" value="Genomic_DNA"/>
</dbReference>
<dbReference type="PIR" id="E64144">
    <property type="entry name" value="E64144"/>
</dbReference>
<dbReference type="RefSeq" id="NP_438343.1">
    <property type="nucleotide sequence ID" value="NC_000907.1"/>
</dbReference>
<dbReference type="SMR" id="P44552"/>
<dbReference type="STRING" id="71421.HI_0175"/>
<dbReference type="EnsemblBacteria" id="AAC21844">
    <property type="protein sequence ID" value="AAC21844"/>
    <property type="gene ID" value="HI_0175"/>
</dbReference>
<dbReference type="KEGG" id="hin:HI_0175"/>
<dbReference type="PATRIC" id="fig|71421.8.peg.179"/>
<dbReference type="eggNOG" id="COG1496">
    <property type="taxonomic scope" value="Bacteria"/>
</dbReference>
<dbReference type="HOGENOM" id="CLU_065784_1_1_6"/>
<dbReference type="OrthoDB" id="4279at2"/>
<dbReference type="PhylomeDB" id="P44552"/>
<dbReference type="BioCyc" id="HINF71421:G1GJ1-185-MONOMER"/>
<dbReference type="Proteomes" id="UP000000579">
    <property type="component" value="Chromosome"/>
</dbReference>
<dbReference type="GO" id="GO:0004000">
    <property type="term" value="F:adenosine deaminase activity"/>
    <property type="evidence" value="ECO:0007669"/>
    <property type="project" value="RHEA"/>
</dbReference>
<dbReference type="GO" id="GO:0005507">
    <property type="term" value="F:copper ion binding"/>
    <property type="evidence" value="ECO:0000318"/>
    <property type="project" value="GO_Central"/>
</dbReference>
<dbReference type="GO" id="GO:0016491">
    <property type="term" value="F:oxidoreductase activity"/>
    <property type="evidence" value="ECO:0007669"/>
    <property type="project" value="UniProtKB-KW"/>
</dbReference>
<dbReference type="GO" id="GO:0017061">
    <property type="term" value="F:S-methyl-5-thioadenosine phosphorylase activity"/>
    <property type="evidence" value="ECO:0007669"/>
    <property type="project" value="UniProtKB-EC"/>
</dbReference>
<dbReference type="CDD" id="cd16833">
    <property type="entry name" value="YfiH"/>
    <property type="match status" value="1"/>
</dbReference>
<dbReference type="FunFam" id="3.60.140.10:FF:000001">
    <property type="entry name" value="Polyphenol oxidase"/>
    <property type="match status" value="1"/>
</dbReference>
<dbReference type="Gene3D" id="3.60.140.10">
    <property type="entry name" value="CNF1/YfiH-like putative cysteine hydrolases"/>
    <property type="match status" value="1"/>
</dbReference>
<dbReference type="InterPro" id="IPR003730">
    <property type="entry name" value="Cu_polyphenol_OxRdtase"/>
</dbReference>
<dbReference type="InterPro" id="IPR038371">
    <property type="entry name" value="Cu_polyphenol_OxRdtase_sf"/>
</dbReference>
<dbReference type="InterPro" id="IPR011324">
    <property type="entry name" value="Cytotoxic_necrot_fac-like_cat"/>
</dbReference>
<dbReference type="NCBIfam" id="TIGR00726">
    <property type="entry name" value="peptidoglycan editing factor PgeF"/>
    <property type="match status" value="1"/>
</dbReference>
<dbReference type="PANTHER" id="PTHR30616:SF2">
    <property type="entry name" value="PURINE NUCLEOSIDE PHOSPHORYLASE LACC1"/>
    <property type="match status" value="1"/>
</dbReference>
<dbReference type="PANTHER" id="PTHR30616">
    <property type="entry name" value="UNCHARACTERIZED PROTEIN YFIH"/>
    <property type="match status" value="1"/>
</dbReference>
<dbReference type="Pfam" id="PF02578">
    <property type="entry name" value="Cu-oxidase_4"/>
    <property type="match status" value="1"/>
</dbReference>
<dbReference type="SUPFAM" id="SSF64438">
    <property type="entry name" value="CNF1/YfiH-like putative cysteine hydrolases"/>
    <property type="match status" value="1"/>
</dbReference>
<evidence type="ECO:0000250" key="1">
    <source>
        <dbReference type="UniProtKB" id="P33644"/>
    </source>
</evidence>
<evidence type="ECO:0000250" key="2">
    <source>
        <dbReference type="UniProtKB" id="P84138"/>
    </source>
</evidence>
<evidence type="ECO:0000250" key="3">
    <source>
        <dbReference type="UniProtKB" id="Q1EIR0"/>
    </source>
</evidence>
<evidence type="ECO:0000305" key="4"/>
<name>PURNU_HAEIN</name>
<proteinExistence type="inferred from homology"/>
<feature type="chain" id="PRO_0000163164" description="Purine nucleoside phosphorylase HI_0175">
    <location>
        <begin position="1"/>
        <end position="244"/>
    </location>
</feature>
<feature type="binding site" evidence="2">
    <location>
        <position position="70"/>
    </location>
    <ligand>
        <name>Zn(2+)</name>
        <dbReference type="ChEBI" id="CHEBI:29105"/>
        <note>catalytic</note>
    </ligand>
</feature>
<feature type="binding site" evidence="2">
    <location>
        <position position="105"/>
    </location>
    <ligand>
        <name>Zn(2+)</name>
        <dbReference type="ChEBI" id="CHEBI:29105"/>
        <note>catalytic</note>
    </ligand>
</feature>
<feature type="binding site" evidence="2">
    <location>
        <position position="122"/>
    </location>
    <ligand>
        <name>Zn(2+)</name>
        <dbReference type="ChEBI" id="CHEBI:29105"/>
        <note>catalytic</note>
    </ligand>
</feature>
<organism>
    <name type="scientific">Haemophilus influenzae (strain ATCC 51907 / DSM 11121 / KW20 / Rd)</name>
    <dbReference type="NCBI Taxonomy" id="71421"/>
    <lineage>
        <taxon>Bacteria</taxon>
        <taxon>Pseudomonadati</taxon>
        <taxon>Pseudomonadota</taxon>
        <taxon>Gammaproteobacteria</taxon>
        <taxon>Pasteurellales</taxon>
        <taxon>Pasteurellaceae</taxon>
        <taxon>Haemophilus</taxon>
    </lineage>
</organism>
<protein>
    <recommendedName>
        <fullName>Purine nucleoside phosphorylase HI_0175</fullName>
        <ecNumber evidence="2">2.4.2.1</ecNumber>
    </recommendedName>
    <alternativeName>
        <fullName>Adenosine deaminase HI_0175</fullName>
        <ecNumber evidence="2">3.5.4.4</ecNumber>
    </alternativeName>
    <alternativeName>
        <fullName>S-methyl-5'-thioadenosine phosphorylase HI_0175</fullName>
        <ecNumber evidence="2">2.4.2.28</ecNumber>
    </alternativeName>
</protein>
<accession>P44552</accession>